<organism>
    <name type="scientific">Acetivibrio thermocellus (strain ATCC 27405 / DSM 1237 / JCM 9322 / NBRC 103400 / NCIMB 10682 / NRRL B-4536 / VPI 7372)</name>
    <name type="common">Clostridium thermocellum</name>
    <dbReference type="NCBI Taxonomy" id="203119"/>
    <lineage>
        <taxon>Bacteria</taxon>
        <taxon>Bacillati</taxon>
        <taxon>Bacillota</taxon>
        <taxon>Clostridia</taxon>
        <taxon>Eubacteriales</taxon>
        <taxon>Oscillospiraceae</taxon>
        <taxon>Acetivibrio</taxon>
    </lineage>
</organism>
<sequence length="431" mass="47891">MSRYDEKKQLKCSFCGKTQEQVKRLVAGPGVYICDECIELCSEIIEEEFEETRADAELNDIPKPSEIKEILDQYVVGQDTAKKALAVAVYNHYKRINSDVKGSDVELQKSNIVMLGPTGSGKTLLAQTLARILNVPFAIADATSLTEAGYVGEDVENILLKLIQAADYDIERAEKGIIYIDEIDKIARKSENPSITRDVSGEGVQQALLKILEGTIASVPPQGGRKHPHQEFIQIDTTNILFICGGAFDGIEKIIQNRIGKKSMGFGAKIESPKKANVGEILKNILPQDLLKFGLIPEFVGRLPVIVTLHSLDREALVKILTEPKNALVKQYQKLFEMDDVILEFEKEAIEAIADKAIERNTGARGLRAILEEIMLDVMYDIPSQENVEKCIITKDTVEKMVPPTVIINENKKSVKKPINKKSRVKKESAS</sequence>
<evidence type="ECO:0000255" key="1">
    <source>
        <dbReference type="HAMAP-Rule" id="MF_00175"/>
    </source>
</evidence>
<evidence type="ECO:0000255" key="2">
    <source>
        <dbReference type="PROSITE-ProRule" id="PRU01250"/>
    </source>
</evidence>
<name>CLPX_ACET2</name>
<keyword id="KW-0067">ATP-binding</keyword>
<keyword id="KW-0143">Chaperone</keyword>
<keyword id="KW-0479">Metal-binding</keyword>
<keyword id="KW-0547">Nucleotide-binding</keyword>
<keyword id="KW-1185">Reference proteome</keyword>
<keyword id="KW-0862">Zinc</keyword>
<gene>
    <name evidence="1" type="primary">clpX</name>
    <name type="ordered locus">Cthe_2741</name>
</gene>
<comment type="function">
    <text evidence="1">ATP-dependent specificity component of the Clp protease. It directs the protease to specific substrates. Can perform chaperone functions in the absence of ClpP.</text>
</comment>
<comment type="subunit">
    <text evidence="1">Component of the ClpX-ClpP complex. Forms a hexameric ring that, in the presence of ATP, binds to fourteen ClpP subunits assembled into a disk-like structure with a central cavity, resembling the structure of eukaryotic proteasomes.</text>
</comment>
<comment type="similarity">
    <text evidence="1">Belongs to the ClpX chaperone family.</text>
</comment>
<protein>
    <recommendedName>
        <fullName evidence="1">ATP-dependent Clp protease ATP-binding subunit ClpX</fullName>
    </recommendedName>
</protein>
<accession>A3DJ11</accession>
<dbReference type="EMBL" id="CP000568">
    <property type="protein sequence ID" value="ABN53940.1"/>
    <property type="molecule type" value="Genomic_DNA"/>
</dbReference>
<dbReference type="RefSeq" id="WP_003514326.1">
    <property type="nucleotide sequence ID" value="NC_009012.1"/>
</dbReference>
<dbReference type="SMR" id="A3DJ11"/>
<dbReference type="STRING" id="203119.Cthe_2741"/>
<dbReference type="GeneID" id="35803439"/>
<dbReference type="KEGG" id="cth:Cthe_2741"/>
<dbReference type="eggNOG" id="COG1219">
    <property type="taxonomic scope" value="Bacteria"/>
</dbReference>
<dbReference type="HOGENOM" id="CLU_014218_8_2_9"/>
<dbReference type="OrthoDB" id="9804062at2"/>
<dbReference type="Proteomes" id="UP000002145">
    <property type="component" value="Chromosome"/>
</dbReference>
<dbReference type="GO" id="GO:0009376">
    <property type="term" value="C:HslUV protease complex"/>
    <property type="evidence" value="ECO:0007669"/>
    <property type="project" value="TreeGrafter"/>
</dbReference>
<dbReference type="GO" id="GO:0005524">
    <property type="term" value="F:ATP binding"/>
    <property type="evidence" value="ECO:0007669"/>
    <property type="project" value="UniProtKB-UniRule"/>
</dbReference>
<dbReference type="GO" id="GO:0016887">
    <property type="term" value="F:ATP hydrolysis activity"/>
    <property type="evidence" value="ECO:0007669"/>
    <property type="project" value="InterPro"/>
</dbReference>
<dbReference type="GO" id="GO:0140662">
    <property type="term" value="F:ATP-dependent protein folding chaperone"/>
    <property type="evidence" value="ECO:0007669"/>
    <property type="project" value="InterPro"/>
</dbReference>
<dbReference type="GO" id="GO:0046983">
    <property type="term" value="F:protein dimerization activity"/>
    <property type="evidence" value="ECO:0007669"/>
    <property type="project" value="InterPro"/>
</dbReference>
<dbReference type="GO" id="GO:0051082">
    <property type="term" value="F:unfolded protein binding"/>
    <property type="evidence" value="ECO:0007669"/>
    <property type="project" value="UniProtKB-UniRule"/>
</dbReference>
<dbReference type="GO" id="GO:0008270">
    <property type="term" value="F:zinc ion binding"/>
    <property type="evidence" value="ECO:0007669"/>
    <property type="project" value="InterPro"/>
</dbReference>
<dbReference type="GO" id="GO:0051301">
    <property type="term" value="P:cell division"/>
    <property type="evidence" value="ECO:0007669"/>
    <property type="project" value="TreeGrafter"/>
</dbReference>
<dbReference type="GO" id="GO:0051603">
    <property type="term" value="P:proteolysis involved in protein catabolic process"/>
    <property type="evidence" value="ECO:0007669"/>
    <property type="project" value="TreeGrafter"/>
</dbReference>
<dbReference type="CDD" id="cd19497">
    <property type="entry name" value="RecA-like_ClpX"/>
    <property type="match status" value="1"/>
</dbReference>
<dbReference type="FunFam" id="1.10.8.60:FF:000002">
    <property type="entry name" value="ATP-dependent Clp protease ATP-binding subunit ClpX"/>
    <property type="match status" value="1"/>
</dbReference>
<dbReference type="FunFam" id="3.40.50.300:FF:000005">
    <property type="entry name" value="ATP-dependent Clp protease ATP-binding subunit ClpX"/>
    <property type="match status" value="1"/>
</dbReference>
<dbReference type="Gene3D" id="1.10.8.60">
    <property type="match status" value="1"/>
</dbReference>
<dbReference type="Gene3D" id="6.20.220.10">
    <property type="entry name" value="ClpX chaperone, C4-type zinc finger domain"/>
    <property type="match status" value="1"/>
</dbReference>
<dbReference type="Gene3D" id="3.40.50.300">
    <property type="entry name" value="P-loop containing nucleotide triphosphate hydrolases"/>
    <property type="match status" value="1"/>
</dbReference>
<dbReference type="HAMAP" id="MF_00175">
    <property type="entry name" value="ClpX"/>
    <property type="match status" value="1"/>
</dbReference>
<dbReference type="InterPro" id="IPR003593">
    <property type="entry name" value="AAA+_ATPase"/>
</dbReference>
<dbReference type="InterPro" id="IPR050052">
    <property type="entry name" value="ATP-dep_Clp_protease_ClpX"/>
</dbReference>
<dbReference type="InterPro" id="IPR003959">
    <property type="entry name" value="ATPase_AAA_core"/>
</dbReference>
<dbReference type="InterPro" id="IPR019489">
    <property type="entry name" value="Clp_ATPase_C"/>
</dbReference>
<dbReference type="InterPro" id="IPR004487">
    <property type="entry name" value="Clp_protease_ATP-bd_su_ClpX"/>
</dbReference>
<dbReference type="InterPro" id="IPR046425">
    <property type="entry name" value="ClpX_bact"/>
</dbReference>
<dbReference type="InterPro" id="IPR027417">
    <property type="entry name" value="P-loop_NTPase"/>
</dbReference>
<dbReference type="InterPro" id="IPR010603">
    <property type="entry name" value="Znf_CppX_C4"/>
</dbReference>
<dbReference type="InterPro" id="IPR038366">
    <property type="entry name" value="Znf_CppX_C4_sf"/>
</dbReference>
<dbReference type="NCBIfam" id="TIGR00382">
    <property type="entry name" value="clpX"/>
    <property type="match status" value="1"/>
</dbReference>
<dbReference type="NCBIfam" id="NF003745">
    <property type="entry name" value="PRK05342.1"/>
    <property type="match status" value="1"/>
</dbReference>
<dbReference type="PANTHER" id="PTHR48102:SF7">
    <property type="entry name" value="ATP-DEPENDENT CLP PROTEASE ATP-BINDING SUBUNIT CLPX-LIKE, MITOCHONDRIAL"/>
    <property type="match status" value="1"/>
</dbReference>
<dbReference type="PANTHER" id="PTHR48102">
    <property type="entry name" value="ATP-DEPENDENT CLP PROTEASE ATP-BINDING SUBUNIT CLPX-LIKE, MITOCHONDRIAL-RELATED"/>
    <property type="match status" value="1"/>
</dbReference>
<dbReference type="Pfam" id="PF07724">
    <property type="entry name" value="AAA_2"/>
    <property type="match status" value="1"/>
</dbReference>
<dbReference type="Pfam" id="PF10431">
    <property type="entry name" value="ClpB_D2-small"/>
    <property type="match status" value="1"/>
</dbReference>
<dbReference type="Pfam" id="PF06689">
    <property type="entry name" value="zf-C4_ClpX"/>
    <property type="match status" value="1"/>
</dbReference>
<dbReference type="SMART" id="SM00382">
    <property type="entry name" value="AAA"/>
    <property type="match status" value="1"/>
</dbReference>
<dbReference type="SMART" id="SM01086">
    <property type="entry name" value="ClpB_D2-small"/>
    <property type="match status" value="1"/>
</dbReference>
<dbReference type="SMART" id="SM00994">
    <property type="entry name" value="zf-C4_ClpX"/>
    <property type="match status" value="1"/>
</dbReference>
<dbReference type="SUPFAM" id="SSF57716">
    <property type="entry name" value="Glucocorticoid receptor-like (DNA-binding domain)"/>
    <property type="match status" value="1"/>
</dbReference>
<dbReference type="SUPFAM" id="SSF52540">
    <property type="entry name" value="P-loop containing nucleoside triphosphate hydrolases"/>
    <property type="match status" value="1"/>
</dbReference>
<dbReference type="PROSITE" id="PS51902">
    <property type="entry name" value="CLPX_ZB"/>
    <property type="match status" value="1"/>
</dbReference>
<reference key="1">
    <citation type="submission" date="2007-02" db="EMBL/GenBank/DDBJ databases">
        <title>Complete sequence of Clostridium thermocellum ATCC 27405.</title>
        <authorList>
            <consortium name="US DOE Joint Genome Institute"/>
            <person name="Copeland A."/>
            <person name="Lucas S."/>
            <person name="Lapidus A."/>
            <person name="Barry K."/>
            <person name="Detter J.C."/>
            <person name="Glavina del Rio T."/>
            <person name="Hammon N."/>
            <person name="Israni S."/>
            <person name="Dalin E."/>
            <person name="Tice H."/>
            <person name="Pitluck S."/>
            <person name="Chertkov O."/>
            <person name="Brettin T."/>
            <person name="Bruce D."/>
            <person name="Han C."/>
            <person name="Tapia R."/>
            <person name="Gilna P."/>
            <person name="Schmutz J."/>
            <person name="Larimer F."/>
            <person name="Land M."/>
            <person name="Hauser L."/>
            <person name="Kyrpides N."/>
            <person name="Mikhailova N."/>
            <person name="Wu J.H.D."/>
            <person name="Newcomb M."/>
            <person name="Richardson P."/>
        </authorList>
    </citation>
    <scope>NUCLEOTIDE SEQUENCE [LARGE SCALE GENOMIC DNA]</scope>
    <source>
        <strain>ATCC 27405 / DSM 1237 / JCM 9322 / NBRC 103400 / NCIMB 10682 / NRRL B-4536 / VPI 7372</strain>
    </source>
</reference>
<proteinExistence type="inferred from homology"/>
<feature type="chain" id="PRO_1000024545" description="ATP-dependent Clp protease ATP-binding subunit ClpX">
    <location>
        <begin position="1"/>
        <end position="431"/>
    </location>
</feature>
<feature type="domain" description="ClpX-type ZB" evidence="2">
    <location>
        <begin position="1"/>
        <end position="53"/>
    </location>
</feature>
<feature type="binding site" evidence="2">
    <location>
        <position position="12"/>
    </location>
    <ligand>
        <name>Zn(2+)</name>
        <dbReference type="ChEBI" id="CHEBI:29105"/>
    </ligand>
</feature>
<feature type="binding site" evidence="2">
    <location>
        <position position="15"/>
    </location>
    <ligand>
        <name>Zn(2+)</name>
        <dbReference type="ChEBI" id="CHEBI:29105"/>
    </ligand>
</feature>
<feature type="binding site" evidence="2">
    <location>
        <position position="34"/>
    </location>
    <ligand>
        <name>Zn(2+)</name>
        <dbReference type="ChEBI" id="CHEBI:29105"/>
    </ligand>
</feature>
<feature type="binding site" evidence="2">
    <location>
        <position position="37"/>
    </location>
    <ligand>
        <name>Zn(2+)</name>
        <dbReference type="ChEBI" id="CHEBI:29105"/>
    </ligand>
</feature>
<feature type="binding site" evidence="1">
    <location>
        <begin position="117"/>
        <end position="124"/>
    </location>
    <ligand>
        <name>ATP</name>
        <dbReference type="ChEBI" id="CHEBI:30616"/>
    </ligand>
</feature>